<organism>
    <name type="scientific">Kocuria rhizophila (strain ATCC 9341 / DSM 348 / NBRC 103217 / DC2201)</name>
    <dbReference type="NCBI Taxonomy" id="378753"/>
    <lineage>
        <taxon>Bacteria</taxon>
        <taxon>Bacillati</taxon>
        <taxon>Actinomycetota</taxon>
        <taxon>Actinomycetes</taxon>
        <taxon>Micrococcales</taxon>
        <taxon>Micrococcaceae</taxon>
        <taxon>Kocuria</taxon>
    </lineage>
</organism>
<proteinExistence type="inferred from homology"/>
<dbReference type="EC" id="2.1.1.199" evidence="1"/>
<dbReference type="EMBL" id="AP009152">
    <property type="protein sequence ID" value="BAG29837.1"/>
    <property type="molecule type" value="Genomic_DNA"/>
</dbReference>
<dbReference type="RefSeq" id="WP_012398558.1">
    <property type="nucleotide sequence ID" value="NC_010617.1"/>
</dbReference>
<dbReference type="SMR" id="B2GJQ6"/>
<dbReference type="STRING" id="378753.KRH_14900"/>
<dbReference type="KEGG" id="krh:KRH_14900"/>
<dbReference type="eggNOG" id="COG0275">
    <property type="taxonomic scope" value="Bacteria"/>
</dbReference>
<dbReference type="HOGENOM" id="CLU_038422_0_0_11"/>
<dbReference type="OrthoDB" id="9806637at2"/>
<dbReference type="Proteomes" id="UP000008838">
    <property type="component" value="Chromosome"/>
</dbReference>
<dbReference type="GO" id="GO:0005737">
    <property type="term" value="C:cytoplasm"/>
    <property type="evidence" value="ECO:0007669"/>
    <property type="project" value="UniProtKB-SubCell"/>
</dbReference>
<dbReference type="GO" id="GO:0071424">
    <property type="term" value="F:rRNA (cytosine-N4-)-methyltransferase activity"/>
    <property type="evidence" value="ECO:0007669"/>
    <property type="project" value="UniProtKB-UniRule"/>
</dbReference>
<dbReference type="GO" id="GO:0070475">
    <property type="term" value="P:rRNA base methylation"/>
    <property type="evidence" value="ECO:0007669"/>
    <property type="project" value="UniProtKB-UniRule"/>
</dbReference>
<dbReference type="Gene3D" id="1.10.150.170">
    <property type="entry name" value="Putative methyltransferase TM0872, insert domain"/>
    <property type="match status" value="1"/>
</dbReference>
<dbReference type="Gene3D" id="3.40.50.150">
    <property type="entry name" value="Vaccinia Virus protein VP39"/>
    <property type="match status" value="1"/>
</dbReference>
<dbReference type="HAMAP" id="MF_01007">
    <property type="entry name" value="16SrRNA_methyltr_H"/>
    <property type="match status" value="1"/>
</dbReference>
<dbReference type="InterPro" id="IPR002903">
    <property type="entry name" value="RsmH"/>
</dbReference>
<dbReference type="InterPro" id="IPR023397">
    <property type="entry name" value="SAM-dep_MeTrfase_MraW_recog"/>
</dbReference>
<dbReference type="InterPro" id="IPR029063">
    <property type="entry name" value="SAM-dependent_MTases_sf"/>
</dbReference>
<dbReference type="NCBIfam" id="TIGR00006">
    <property type="entry name" value="16S rRNA (cytosine(1402)-N(4))-methyltransferase RsmH"/>
    <property type="match status" value="1"/>
</dbReference>
<dbReference type="PANTHER" id="PTHR11265:SF0">
    <property type="entry name" value="12S RRNA N4-METHYLCYTIDINE METHYLTRANSFERASE"/>
    <property type="match status" value="1"/>
</dbReference>
<dbReference type="PANTHER" id="PTHR11265">
    <property type="entry name" value="S-ADENOSYL-METHYLTRANSFERASE MRAW"/>
    <property type="match status" value="1"/>
</dbReference>
<dbReference type="Pfam" id="PF01795">
    <property type="entry name" value="Methyltransf_5"/>
    <property type="match status" value="1"/>
</dbReference>
<dbReference type="PIRSF" id="PIRSF004486">
    <property type="entry name" value="MraW"/>
    <property type="match status" value="1"/>
</dbReference>
<dbReference type="SUPFAM" id="SSF81799">
    <property type="entry name" value="Putative methyltransferase TM0872, insert domain"/>
    <property type="match status" value="1"/>
</dbReference>
<dbReference type="SUPFAM" id="SSF53335">
    <property type="entry name" value="S-adenosyl-L-methionine-dependent methyltransferases"/>
    <property type="match status" value="1"/>
</dbReference>
<comment type="function">
    <text evidence="1">Specifically methylates the N4 position of cytidine in position 1402 (C1402) of 16S rRNA.</text>
</comment>
<comment type="catalytic activity">
    <reaction evidence="1">
        <text>cytidine(1402) in 16S rRNA + S-adenosyl-L-methionine = N(4)-methylcytidine(1402) in 16S rRNA + S-adenosyl-L-homocysteine + H(+)</text>
        <dbReference type="Rhea" id="RHEA:42928"/>
        <dbReference type="Rhea" id="RHEA-COMP:10286"/>
        <dbReference type="Rhea" id="RHEA-COMP:10287"/>
        <dbReference type="ChEBI" id="CHEBI:15378"/>
        <dbReference type="ChEBI" id="CHEBI:57856"/>
        <dbReference type="ChEBI" id="CHEBI:59789"/>
        <dbReference type="ChEBI" id="CHEBI:74506"/>
        <dbReference type="ChEBI" id="CHEBI:82748"/>
        <dbReference type="EC" id="2.1.1.199"/>
    </reaction>
</comment>
<comment type="subcellular location">
    <subcellularLocation>
        <location evidence="1">Cytoplasm</location>
    </subcellularLocation>
</comment>
<comment type="similarity">
    <text evidence="1">Belongs to the methyltransferase superfamily. RsmH family.</text>
</comment>
<sequence length="327" mass="36125">MEEAPAEQRHVPVLLDRCLDLLAPALDTEAPVVLDATLGMGGHTHAMLERFPHLRVVGIDRDPQALELAGRRLQRFGSRFASIHTTYDHIADAAAAAGVERVDGVLFDLGVSSLQLDERERGFAYSFDAPLDMRMDSRAELSAYTVVNEYSEARLRDIIFRWGEDRFAPRIARAIVAARADAPLRTTAQLVDAVRSAVPAAAQHKKGHPAKQTFQALRIEVNEELDVLERAIPAAVETVRVGGRVIAMSYHSLEDRIVKQEFARGARSTAPRGFPVELPEHQPVLKVLTRGAERADEQETLENPRAASARLRAVERLRETTTPGSAR</sequence>
<gene>
    <name evidence="1" type="primary">rsmH</name>
    <name type="synonym">mraW</name>
    <name type="ordered locus">KRH_14900</name>
</gene>
<keyword id="KW-0963">Cytoplasm</keyword>
<keyword id="KW-0489">Methyltransferase</keyword>
<keyword id="KW-1185">Reference proteome</keyword>
<keyword id="KW-0698">rRNA processing</keyword>
<keyword id="KW-0949">S-adenosyl-L-methionine</keyword>
<keyword id="KW-0808">Transferase</keyword>
<evidence type="ECO:0000255" key="1">
    <source>
        <dbReference type="HAMAP-Rule" id="MF_01007"/>
    </source>
</evidence>
<evidence type="ECO:0000256" key="2">
    <source>
        <dbReference type="SAM" id="MobiDB-lite"/>
    </source>
</evidence>
<reference key="1">
    <citation type="journal article" date="2008" name="J. Bacteriol.">
        <title>Complete genome sequence of the soil actinomycete Kocuria rhizophila.</title>
        <authorList>
            <person name="Takarada H."/>
            <person name="Sekine M."/>
            <person name="Kosugi H."/>
            <person name="Matsuo Y."/>
            <person name="Fujisawa T."/>
            <person name="Omata S."/>
            <person name="Kishi E."/>
            <person name="Shimizu A."/>
            <person name="Tsukatani N."/>
            <person name="Tanikawa S."/>
            <person name="Fujita N."/>
            <person name="Harayama S."/>
        </authorList>
    </citation>
    <scope>NUCLEOTIDE SEQUENCE [LARGE SCALE GENOMIC DNA]</scope>
    <source>
        <strain>ATCC 9341 / DSM 348 / NBRC 103217 / DC2201</strain>
    </source>
</reference>
<feature type="chain" id="PRO_0000386937" description="Ribosomal RNA small subunit methyltransferase H">
    <location>
        <begin position="1"/>
        <end position="327"/>
    </location>
</feature>
<feature type="region of interest" description="Disordered" evidence="2">
    <location>
        <begin position="292"/>
        <end position="327"/>
    </location>
</feature>
<feature type="binding site" evidence="1">
    <location>
        <begin position="41"/>
        <end position="43"/>
    </location>
    <ligand>
        <name>S-adenosyl-L-methionine</name>
        <dbReference type="ChEBI" id="CHEBI:59789"/>
    </ligand>
</feature>
<feature type="binding site" evidence="1">
    <location>
        <position position="60"/>
    </location>
    <ligand>
        <name>S-adenosyl-L-methionine</name>
        <dbReference type="ChEBI" id="CHEBI:59789"/>
    </ligand>
</feature>
<feature type="binding site" evidence="1">
    <location>
        <position position="87"/>
    </location>
    <ligand>
        <name>S-adenosyl-L-methionine</name>
        <dbReference type="ChEBI" id="CHEBI:59789"/>
    </ligand>
</feature>
<feature type="binding site" evidence="1">
    <location>
        <position position="108"/>
    </location>
    <ligand>
        <name>S-adenosyl-L-methionine</name>
        <dbReference type="ChEBI" id="CHEBI:59789"/>
    </ligand>
</feature>
<feature type="binding site" evidence="1">
    <location>
        <position position="115"/>
    </location>
    <ligand>
        <name>S-adenosyl-L-methionine</name>
        <dbReference type="ChEBI" id="CHEBI:59789"/>
    </ligand>
</feature>
<accession>B2GJQ6</accession>
<name>RSMH_KOCRD</name>
<protein>
    <recommendedName>
        <fullName evidence="1">Ribosomal RNA small subunit methyltransferase H</fullName>
        <ecNumber evidence="1">2.1.1.199</ecNumber>
    </recommendedName>
    <alternativeName>
        <fullName evidence="1">16S rRNA m(4)C1402 methyltransferase</fullName>
    </alternativeName>
    <alternativeName>
        <fullName evidence="1">rRNA (cytosine-N(4)-)-methyltransferase RsmH</fullName>
    </alternativeName>
</protein>